<name>RS3_PROMM</name>
<accession>Q7V537</accession>
<comment type="function">
    <text evidence="1">Binds the lower part of the 30S subunit head. Binds mRNA in the 70S ribosome, positioning it for translation.</text>
</comment>
<comment type="subunit">
    <text evidence="1">Part of the 30S ribosomal subunit. Forms a tight complex with proteins S10 and S14.</text>
</comment>
<comment type="similarity">
    <text evidence="1">Belongs to the universal ribosomal protein uS3 family.</text>
</comment>
<feature type="chain" id="PRO_0000130176" description="Small ribosomal subunit protein uS3">
    <location>
        <begin position="1"/>
        <end position="242"/>
    </location>
</feature>
<feature type="domain" description="KH type-2" evidence="1">
    <location>
        <begin position="39"/>
        <end position="110"/>
    </location>
</feature>
<feature type="region of interest" description="Disordered" evidence="2">
    <location>
        <begin position="217"/>
        <end position="242"/>
    </location>
</feature>
<feature type="compositionally biased region" description="Basic and acidic residues" evidence="2">
    <location>
        <begin position="233"/>
        <end position="242"/>
    </location>
</feature>
<reference key="1">
    <citation type="journal article" date="2003" name="Nature">
        <title>Genome divergence in two Prochlorococcus ecotypes reflects oceanic niche differentiation.</title>
        <authorList>
            <person name="Rocap G."/>
            <person name="Larimer F.W."/>
            <person name="Lamerdin J.E."/>
            <person name="Malfatti S."/>
            <person name="Chain P."/>
            <person name="Ahlgren N.A."/>
            <person name="Arellano A."/>
            <person name="Coleman M."/>
            <person name="Hauser L."/>
            <person name="Hess W.R."/>
            <person name="Johnson Z.I."/>
            <person name="Land M.L."/>
            <person name="Lindell D."/>
            <person name="Post A.F."/>
            <person name="Regala W."/>
            <person name="Shah M."/>
            <person name="Shaw S.L."/>
            <person name="Steglich C."/>
            <person name="Sullivan M.B."/>
            <person name="Ting C.S."/>
            <person name="Tolonen A."/>
            <person name="Webb E.A."/>
            <person name="Zinser E.R."/>
            <person name="Chisholm S.W."/>
        </authorList>
    </citation>
    <scope>NUCLEOTIDE SEQUENCE [LARGE SCALE GENOMIC DNA]</scope>
    <source>
        <strain>MIT 9313</strain>
    </source>
</reference>
<protein>
    <recommendedName>
        <fullName evidence="1">Small ribosomal subunit protein uS3</fullName>
    </recommendedName>
    <alternativeName>
        <fullName evidence="3">30S ribosomal protein S3</fullName>
    </alternativeName>
</protein>
<organism>
    <name type="scientific">Prochlorococcus marinus (strain MIT 9313)</name>
    <dbReference type="NCBI Taxonomy" id="74547"/>
    <lineage>
        <taxon>Bacteria</taxon>
        <taxon>Bacillati</taxon>
        <taxon>Cyanobacteriota</taxon>
        <taxon>Cyanophyceae</taxon>
        <taxon>Synechococcales</taxon>
        <taxon>Prochlorococcaceae</taxon>
        <taxon>Prochlorococcus</taxon>
    </lineage>
</organism>
<keyword id="KW-1185">Reference proteome</keyword>
<keyword id="KW-0687">Ribonucleoprotein</keyword>
<keyword id="KW-0689">Ribosomal protein</keyword>
<keyword id="KW-0694">RNA-binding</keyword>
<keyword id="KW-0699">rRNA-binding</keyword>
<evidence type="ECO:0000255" key="1">
    <source>
        <dbReference type="HAMAP-Rule" id="MF_01309"/>
    </source>
</evidence>
<evidence type="ECO:0000256" key="2">
    <source>
        <dbReference type="SAM" id="MobiDB-lite"/>
    </source>
</evidence>
<evidence type="ECO:0000305" key="3"/>
<dbReference type="EMBL" id="BX548175">
    <property type="protein sequence ID" value="CAE21913.1"/>
    <property type="molecule type" value="Genomic_DNA"/>
</dbReference>
<dbReference type="RefSeq" id="WP_011131105.1">
    <property type="nucleotide sequence ID" value="NC_005071.1"/>
</dbReference>
<dbReference type="SMR" id="Q7V537"/>
<dbReference type="KEGG" id="pmt:PMT_1738"/>
<dbReference type="eggNOG" id="COG0092">
    <property type="taxonomic scope" value="Bacteria"/>
</dbReference>
<dbReference type="HOGENOM" id="CLU_058591_0_2_3"/>
<dbReference type="OrthoDB" id="9806396at2"/>
<dbReference type="Proteomes" id="UP000001423">
    <property type="component" value="Chromosome"/>
</dbReference>
<dbReference type="GO" id="GO:0022627">
    <property type="term" value="C:cytosolic small ribosomal subunit"/>
    <property type="evidence" value="ECO:0007669"/>
    <property type="project" value="TreeGrafter"/>
</dbReference>
<dbReference type="GO" id="GO:0003729">
    <property type="term" value="F:mRNA binding"/>
    <property type="evidence" value="ECO:0007669"/>
    <property type="project" value="UniProtKB-UniRule"/>
</dbReference>
<dbReference type="GO" id="GO:0019843">
    <property type="term" value="F:rRNA binding"/>
    <property type="evidence" value="ECO:0007669"/>
    <property type="project" value="UniProtKB-UniRule"/>
</dbReference>
<dbReference type="GO" id="GO:0003735">
    <property type="term" value="F:structural constituent of ribosome"/>
    <property type="evidence" value="ECO:0007669"/>
    <property type="project" value="InterPro"/>
</dbReference>
<dbReference type="GO" id="GO:0006412">
    <property type="term" value="P:translation"/>
    <property type="evidence" value="ECO:0007669"/>
    <property type="project" value="UniProtKB-UniRule"/>
</dbReference>
<dbReference type="CDD" id="cd02412">
    <property type="entry name" value="KH-II_30S_S3"/>
    <property type="match status" value="1"/>
</dbReference>
<dbReference type="FunFam" id="3.30.300.20:FF:000001">
    <property type="entry name" value="30S ribosomal protein S3"/>
    <property type="match status" value="1"/>
</dbReference>
<dbReference type="Gene3D" id="3.30.300.20">
    <property type="match status" value="1"/>
</dbReference>
<dbReference type="Gene3D" id="3.30.1140.32">
    <property type="entry name" value="Ribosomal protein S3, C-terminal domain"/>
    <property type="match status" value="1"/>
</dbReference>
<dbReference type="HAMAP" id="MF_01309_B">
    <property type="entry name" value="Ribosomal_uS3_B"/>
    <property type="match status" value="1"/>
</dbReference>
<dbReference type="InterPro" id="IPR004087">
    <property type="entry name" value="KH_dom"/>
</dbReference>
<dbReference type="InterPro" id="IPR015946">
    <property type="entry name" value="KH_dom-like_a/b"/>
</dbReference>
<dbReference type="InterPro" id="IPR004044">
    <property type="entry name" value="KH_dom_type_2"/>
</dbReference>
<dbReference type="InterPro" id="IPR009019">
    <property type="entry name" value="KH_sf_prok-type"/>
</dbReference>
<dbReference type="InterPro" id="IPR036419">
    <property type="entry name" value="Ribosomal_S3_C_sf"/>
</dbReference>
<dbReference type="InterPro" id="IPR005704">
    <property type="entry name" value="Ribosomal_uS3_bac-typ"/>
</dbReference>
<dbReference type="InterPro" id="IPR001351">
    <property type="entry name" value="Ribosomal_uS3_C"/>
</dbReference>
<dbReference type="InterPro" id="IPR018280">
    <property type="entry name" value="Ribosomal_uS3_CS"/>
</dbReference>
<dbReference type="NCBIfam" id="TIGR01009">
    <property type="entry name" value="rpsC_bact"/>
    <property type="match status" value="1"/>
</dbReference>
<dbReference type="PANTHER" id="PTHR11760">
    <property type="entry name" value="30S/40S RIBOSOMAL PROTEIN S3"/>
    <property type="match status" value="1"/>
</dbReference>
<dbReference type="PANTHER" id="PTHR11760:SF19">
    <property type="entry name" value="SMALL RIBOSOMAL SUBUNIT PROTEIN US3C"/>
    <property type="match status" value="1"/>
</dbReference>
<dbReference type="Pfam" id="PF07650">
    <property type="entry name" value="KH_2"/>
    <property type="match status" value="1"/>
</dbReference>
<dbReference type="Pfam" id="PF00189">
    <property type="entry name" value="Ribosomal_S3_C"/>
    <property type="match status" value="1"/>
</dbReference>
<dbReference type="SMART" id="SM00322">
    <property type="entry name" value="KH"/>
    <property type="match status" value="1"/>
</dbReference>
<dbReference type="SUPFAM" id="SSF54814">
    <property type="entry name" value="Prokaryotic type KH domain (KH-domain type II)"/>
    <property type="match status" value="1"/>
</dbReference>
<dbReference type="SUPFAM" id="SSF54821">
    <property type="entry name" value="Ribosomal protein S3 C-terminal domain"/>
    <property type="match status" value="1"/>
</dbReference>
<dbReference type="PROSITE" id="PS50823">
    <property type="entry name" value="KH_TYPE_2"/>
    <property type="match status" value="1"/>
</dbReference>
<dbReference type="PROSITE" id="PS00548">
    <property type="entry name" value="RIBOSOMAL_S3"/>
    <property type="match status" value="1"/>
</dbReference>
<gene>
    <name evidence="1" type="primary">rpsC</name>
    <name evidence="1" type="synonym">rps3</name>
    <name type="ordered locus">PMT_1738</name>
</gene>
<sequence>MGHKIHPTGLRLGITQEHRSRWYATSKMYPILLQEDDRIRRFIHKKYGAAGISDVLIARKADQLEVELKTARPGVLVGRQGSGIEELRTGIQKTIGDHSRQVRINVVEVERVDADAFLLAEYIAQQLEKRVAFRRTIRMAVQRAQRAGVLGLKIQVGGRLNGAEIARTEWTREGRVPLHTLRAEIDYATKVASTTYGVLGIKVWIFKGEVLGDEAQTMPVGASPRRRGNRRPQQFEDRSNEG</sequence>
<proteinExistence type="inferred from homology"/>